<evidence type="ECO:0000255" key="1">
    <source>
        <dbReference type="HAMAP-Rule" id="MF_00123"/>
    </source>
</evidence>
<proteinExistence type="inferred from homology"/>
<comment type="catalytic activity">
    <reaction evidence="1">
        <text>tRNA(Arg) + L-arginine + ATP = L-arginyl-tRNA(Arg) + AMP + diphosphate</text>
        <dbReference type="Rhea" id="RHEA:20301"/>
        <dbReference type="Rhea" id="RHEA-COMP:9658"/>
        <dbReference type="Rhea" id="RHEA-COMP:9673"/>
        <dbReference type="ChEBI" id="CHEBI:30616"/>
        <dbReference type="ChEBI" id="CHEBI:32682"/>
        <dbReference type="ChEBI" id="CHEBI:33019"/>
        <dbReference type="ChEBI" id="CHEBI:78442"/>
        <dbReference type="ChEBI" id="CHEBI:78513"/>
        <dbReference type="ChEBI" id="CHEBI:456215"/>
        <dbReference type="EC" id="6.1.1.19"/>
    </reaction>
</comment>
<comment type="subunit">
    <text evidence="1">Monomer.</text>
</comment>
<comment type="subcellular location">
    <subcellularLocation>
        <location evidence="1">Cytoplasm</location>
    </subcellularLocation>
</comment>
<comment type="similarity">
    <text evidence="1">Belongs to the class-I aminoacyl-tRNA synthetase family.</text>
</comment>
<sequence length="551" mass="61402">MRAKNHLQTALKAVVADLELPWPDKVSIEPPKDKKFGDLAANIALVLAKPAAMPPRELAARITERLQQKYPEISGVEIAGPGFINVTYAPDFWHRTVHMVEQAGGRFGSVNVGNGRKVQIEYVSANPTGPLHIGHGRGAAIGDSLARMMRFAGFETSTEYYINDAGRQMLLLGASVYYRAKQIKGLDVAEPEEYYRGDYIRDIASEVLGFTPDLLEKPEEEALAVCQKYAVDTIMAGIRQDLADFSVSHDVWFSEKSLVETGAVDKTFDRLRRSGLAYEEDGALWFRTTDFGDDKNRVLKKSNGYLTYFASDIAYHDNKYDRGFDLCVDIWGADHHGYVPRMRAAVQALGKPADSFDVILVQLVNLLRNGEQVAMSTRAGEFETLADVVKEVGADAARFMFLSRKSDSSLDFDLELVKQRSMDNPVYYVQYAHARICSVLRKAAERGTTPETHSDEELLKPLVHADEIDMLRLVDRFEDTVEAAATSLSVHHISYYLQELASALHRFYANHPVLNAPDEQILKARLALLRAVAQVLRNGLDLLGVSAPEAM</sequence>
<protein>
    <recommendedName>
        <fullName evidence="1">Arginine--tRNA ligase</fullName>
        <ecNumber evidence="1">6.1.1.19</ecNumber>
    </recommendedName>
    <alternativeName>
        <fullName evidence="1">Arginyl-tRNA synthetase</fullName>
        <shortName evidence="1">ArgRS</shortName>
    </alternativeName>
</protein>
<organism>
    <name type="scientific">Oleidesulfovibrio alaskensis (strain ATCC BAA-1058 / DSM 17464 / G20)</name>
    <name type="common">Desulfovibrio alaskensis</name>
    <dbReference type="NCBI Taxonomy" id="207559"/>
    <lineage>
        <taxon>Bacteria</taxon>
        <taxon>Pseudomonadati</taxon>
        <taxon>Thermodesulfobacteriota</taxon>
        <taxon>Desulfovibrionia</taxon>
        <taxon>Desulfovibrionales</taxon>
        <taxon>Desulfovibrionaceae</taxon>
        <taxon>Oleidesulfovibrio</taxon>
    </lineage>
</organism>
<accession>Q30Z04</accession>
<reference key="1">
    <citation type="journal article" date="2011" name="J. Bacteriol.">
        <title>Complete genome sequence and updated annotation of Desulfovibrio alaskensis G20.</title>
        <authorList>
            <person name="Hauser L.J."/>
            <person name="Land M.L."/>
            <person name="Brown S.D."/>
            <person name="Larimer F."/>
            <person name="Keller K.L."/>
            <person name="Rapp-Giles B.J."/>
            <person name="Price M.N."/>
            <person name="Lin M."/>
            <person name="Bruce D.C."/>
            <person name="Detter J.C."/>
            <person name="Tapia R."/>
            <person name="Han C.S."/>
            <person name="Goodwin L.A."/>
            <person name="Cheng J.F."/>
            <person name="Pitluck S."/>
            <person name="Copeland A."/>
            <person name="Lucas S."/>
            <person name="Nolan M."/>
            <person name="Lapidus A.L."/>
            <person name="Palumbo A.V."/>
            <person name="Wall J.D."/>
        </authorList>
    </citation>
    <scope>NUCLEOTIDE SEQUENCE [LARGE SCALE GENOMIC DNA]</scope>
    <source>
        <strain>ATCC BAA-1058 / DSM 17464 / G20</strain>
    </source>
</reference>
<feature type="chain" id="PRO_0000242015" description="Arginine--tRNA ligase">
    <location>
        <begin position="1"/>
        <end position="551"/>
    </location>
</feature>
<feature type="short sequence motif" description="'HIGH' region">
    <location>
        <begin position="125"/>
        <end position="135"/>
    </location>
</feature>
<name>SYR_OLEA2</name>
<gene>
    <name evidence="1" type="primary">argS</name>
    <name type="ordered locus">Dde_2295</name>
</gene>
<dbReference type="EC" id="6.1.1.19" evidence="1"/>
<dbReference type="EMBL" id="CP000112">
    <property type="protein sequence ID" value="ABB39092.1"/>
    <property type="molecule type" value="Genomic_DNA"/>
</dbReference>
<dbReference type="RefSeq" id="WP_011368175.1">
    <property type="nucleotide sequence ID" value="NC_007519.1"/>
</dbReference>
<dbReference type="SMR" id="Q30Z04"/>
<dbReference type="STRING" id="207559.Dde_2295"/>
<dbReference type="KEGG" id="dde:Dde_2295"/>
<dbReference type="eggNOG" id="COG0018">
    <property type="taxonomic scope" value="Bacteria"/>
</dbReference>
<dbReference type="HOGENOM" id="CLU_006406_0_1_7"/>
<dbReference type="Proteomes" id="UP000002710">
    <property type="component" value="Chromosome"/>
</dbReference>
<dbReference type="GO" id="GO:0005737">
    <property type="term" value="C:cytoplasm"/>
    <property type="evidence" value="ECO:0007669"/>
    <property type="project" value="UniProtKB-SubCell"/>
</dbReference>
<dbReference type="GO" id="GO:0004814">
    <property type="term" value="F:arginine-tRNA ligase activity"/>
    <property type="evidence" value="ECO:0007669"/>
    <property type="project" value="UniProtKB-UniRule"/>
</dbReference>
<dbReference type="GO" id="GO:0005524">
    <property type="term" value="F:ATP binding"/>
    <property type="evidence" value="ECO:0007669"/>
    <property type="project" value="UniProtKB-UniRule"/>
</dbReference>
<dbReference type="GO" id="GO:0006420">
    <property type="term" value="P:arginyl-tRNA aminoacylation"/>
    <property type="evidence" value="ECO:0007669"/>
    <property type="project" value="UniProtKB-UniRule"/>
</dbReference>
<dbReference type="CDD" id="cd00671">
    <property type="entry name" value="ArgRS_core"/>
    <property type="match status" value="1"/>
</dbReference>
<dbReference type="FunFam" id="1.10.730.10:FF:000008">
    <property type="entry name" value="Arginine--tRNA ligase"/>
    <property type="match status" value="1"/>
</dbReference>
<dbReference type="FunFam" id="3.40.50.620:FF:000062">
    <property type="entry name" value="Arginine--tRNA ligase"/>
    <property type="match status" value="1"/>
</dbReference>
<dbReference type="Gene3D" id="3.30.1360.70">
    <property type="entry name" value="Arginyl tRNA synthetase N-terminal domain"/>
    <property type="match status" value="1"/>
</dbReference>
<dbReference type="Gene3D" id="3.40.50.620">
    <property type="entry name" value="HUPs"/>
    <property type="match status" value="1"/>
</dbReference>
<dbReference type="Gene3D" id="1.10.730.10">
    <property type="entry name" value="Isoleucyl-tRNA Synthetase, Domain 1"/>
    <property type="match status" value="1"/>
</dbReference>
<dbReference type="HAMAP" id="MF_00123">
    <property type="entry name" value="Arg_tRNA_synth"/>
    <property type="match status" value="1"/>
</dbReference>
<dbReference type="InterPro" id="IPR001412">
    <property type="entry name" value="aa-tRNA-synth_I_CS"/>
</dbReference>
<dbReference type="InterPro" id="IPR001278">
    <property type="entry name" value="Arg-tRNA-ligase"/>
</dbReference>
<dbReference type="InterPro" id="IPR005148">
    <property type="entry name" value="Arg-tRNA-synth_N"/>
</dbReference>
<dbReference type="InterPro" id="IPR036695">
    <property type="entry name" value="Arg-tRNA-synth_N_sf"/>
</dbReference>
<dbReference type="InterPro" id="IPR035684">
    <property type="entry name" value="ArgRS_core"/>
</dbReference>
<dbReference type="InterPro" id="IPR008909">
    <property type="entry name" value="DALR_anticod-bd"/>
</dbReference>
<dbReference type="InterPro" id="IPR014729">
    <property type="entry name" value="Rossmann-like_a/b/a_fold"/>
</dbReference>
<dbReference type="InterPro" id="IPR009080">
    <property type="entry name" value="tRNAsynth_Ia_anticodon-bd"/>
</dbReference>
<dbReference type="NCBIfam" id="TIGR00456">
    <property type="entry name" value="argS"/>
    <property type="match status" value="1"/>
</dbReference>
<dbReference type="PANTHER" id="PTHR11956:SF5">
    <property type="entry name" value="ARGININE--TRNA LIGASE, CYTOPLASMIC"/>
    <property type="match status" value="1"/>
</dbReference>
<dbReference type="PANTHER" id="PTHR11956">
    <property type="entry name" value="ARGINYL-TRNA SYNTHETASE"/>
    <property type="match status" value="1"/>
</dbReference>
<dbReference type="Pfam" id="PF03485">
    <property type="entry name" value="Arg_tRNA_synt_N"/>
    <property type="match status" value="1"/>
</dbReference>
<dbReference type="Pfam" id="PF05746">
    <property type="entry name" value="DALR_1"/>
    <property type="match status" value="1"/>
</dbReference>
<dbReference type="Pfam" id="PF00750">
    <property type="entry name" value="tRNA-synt_1d"/>
    <property type="match status" value="1"/>
</dbReference>
<dbReference type="PRINTS" id="PR01038">
    <property type="entry name" value="TRNASYNTHARG"/>
</dbReference>
<dbReference type="SMART" id="SM01016">
    <property type="entry name" value="Arg_tRNA_synt_N"/>
    <property type="match status" value="1"/>
</dbReference>
<dbReference type="SMART" id="SM00836">
    <property type="entry name" value="DALR_1"/>
    <property type="match status" value="1"/>
</dbReference>
<dbReference type="SUPFAM" id="SSF47323">
    <property type="entry name" value="Anticodon-binding domain of a subclass of class I aminoacyl-tRNA synthetases"/>
    <property type="match status" value="1"/>
</dbReference>
<dbReference type="SUPFAM" id="SSF55190">
    <property type="entry name" value="Arginyl-tRNA synthetase (ArgRS), N-terminal 'additional' domain"/>
    <property type="match status" value="1"/>
</dbReference>
<dbReference type="SUPFAM" id="SSF52374">
    <property type="entry name" value="Nucleotidylyl transferase"/>
    <property type="match status" value="1"/>
</dbReference>
<dbReference type="PROSITE" id="PS00178">
    <property type="entry name" value="AA_TRNA_LIGASE_I"/>
    <property type="match status" value="1"/>
</dbReference>
<keyword id="KW-0030">Aminoacyl-tRNA synthetase</keyword>
<keyword id="KW-0067">ATP-binding</keyword>
<keyword id="KW-0963">Cytoplasm</keyword>
<keyword id="KW-0436">Ligase</keyword>
<keyword id="KW-0547">Nucleotide-binding</keyword>
<keyword id="KW-0648">Protein biosynthesis</keyword>
<keyword id="KW-1185">Reference proteome</keyword>